<organism>
    <name type="scientific">Leuconostoc mesenteroides subsp. mesenteroides (strain ATCC 8293 / DSM 20343 / BCRC 11652 / CCM 1803 / JCM 6124 / NCDO 523 / NBRC 100496 / NCIMB 8023 / NCTC 12954 / NRRL B-1118 / 37Y)</name>
    <dbReference type="NCBI Taxonomy" id="203120"/>
    <lineage>
        <taxon>Bacteria</taxon>
        <taxon>Bacillati</taxon>
        <taxon>Bacillota</taxon>
        <taxon>Bacilli</taxon>
        <taxon>Lactobacillales</taxon>
        <taxon>Lactobacillaceae</taxon>
        <taxon>Leuconostoc</taxon>
    </lineage>
</organism>
<sequence length="390" mass="43542">MQAVGIITEYNPFHNGHIYHIQQAKKLTGADVVVAVMSGNFVQRGEPALFDKWQRTQMALENGVDLVIELPTFFAVQPSHIFADGAIQLLSALGVDNIVFGSEHPEVDFLSIAKQAPTIAEGQEFKNHTQTFASAYAKQLEAETSFKLEEPNDILALGYASAILNQQANIGIIPIQRAEANYHDANFTDEQSIASASSIRLALHKGKTEKIKNVVPEATKVALDTAANTIDFESKFWSMLKYRLTTDTVGQLGQIYQMAEGLEHRFAKTALNDSGPQSYQSFIKSTKSKRYTFTRIQRTLLYTLLNIKVDQMQAAMQDPYLRILGFTSTGQQYLNEIKKQVTLPLISKVDSSLAKSNLRLDYKAGKVWQLLANEGAPTQDVTRMPLYWEK</sequence>
<comment type="function">
    <text evidence="1">Catalyzes the formation of N(4)-acetylcytidine (ac(4)C) at the wobble position of elongator tRNA(Met), using acetate and ATP as substrates. First activates an acetate ion to form acetyladenylate (Ac-AMP) and then transfers the acetyl group to tRNA to form ac(4)C34.</text>
</comment>
<comment type="catalytic activity">
    <reaction evidence="1">
        <text>cytidine(34) in elongator tRNA(Met) + acetate + ATP = N(4)-acetylcytidine(34) in elongator tRNA(Met) + AMP + diphosphate</text>
        <dbReference type="Rhea" id="RHEA:58144"/>
        <dbReference type="Rhea" id="RHEA-COMP:10693"/>
        <dbReference type="Rhea" id="RHEA-COMP:10694"/>
        <dbReference type="ChEBI" id="CHEBI:30089"/>
        <dbReference type="ChEBI" id="CHEBI:30616"/>
        <dbReference type="ChEBI" id="CHEBI:33019"/>
        <dbReference type="ChEBI" id="CHEBI:74900"/>
        <dbReference type="ChEBI" id="CHEBI:82748"/>
        <dbReference type="ChEBI" id="CHEBI:456215"/>
    </reaction>
</comment>
<comment type="subcellular location">
    <subcellularLocation>
        <location evidence="1">Cytoplasm</location>
    </subcellularLocation>
</comment>
<comment type="similarity">
    <text evidence="1">Belongs to the TmcAL family.</text>
</comment>
<keyword id="KW-0067">ATP-binding</keyword>
<keyword id="KW-0963">Cytoplasm</keyword>
<keyword id="KW-0436">Ligase</keyword>
<keyword id="KW-0547">Nucleotide-binding</keyword>
<keyword id="KW-1185">Reference proteome</keyword>
<keyword id="KW-0694">RNA-binding</keyword>
<keyword id="KW-0819">tRNA processing</keyword>
<keyword id="KW-0820">tRNA-binding</keyword>
<proteinExistence type="inferred from homology"/>
<protein>
    <recommendedName>
        <fullName evidence="1">tRNA(Met) cytidine acetate ligase</fullName>
        <ecNumber evidence="1">6.3.4.-</ecNumber>
    </recommendedName>
</protein>
<evidence type="ECO:0000255" key="1">
    <source>
        <dbReference type="HAMAP-Rule" id="MF_01539"/>
    </source>
</evidence>
<accession>Q03VF1</accession>
<gene>
    <name evidence="1" type="primary">tmcAL</name>
    <name type="ordered locus">LEUM_1734</name>
</gene>
<reference key="1">
    <citation type="journal article" date="2006" name="Proc. Natl. Acad. Sci. U.S.A.">
        <title>Comparative genomics of the lactic acid bacteria.</title>
        <authorList>
            <person name="Makarova K.S."/>
            <person name="Slesarev A."/>
            <person name="Wolf Y.I."/>
            <person name="Sorokin A."/>
            <person name="Mirkin B."/>
            <person name="Koonin E.V."/>
            <person name="Pavlov A."/>
            <person name="Pavlova N."/>
            <person name="Karamychev V."/>
            <person name="Polouchine N."/>
            <person name="Shakhova V."/>
            <person name="Grigoriev I."/>
            <person name="Lou Y."/>
            <person name="Rohksar D."/>
            <person name="Lucas S."/>
            <person name="Huang K."/>
            <person name="Goodstein D.M."/>
            <person name="Hawkins T."/>
            <person name="Plengvidhya V."/>
            <person name="Welker D."/>
            <person name="Hughes J."/>
            <person name="Goh Y."/>
            <person name="Benson A."/>
            <person name="Baldwin K."/>
            <person name="Lee J.-H."/>
            <person name="Diaz-Muniz I."/>
            <person name="Dosti B."/>
            <person name="Smeianov V."/>
            <person name="Wechter W."/>
            <person name="Barabote R."/>
            <person name="Lorca G."/>
            <person name="Altermann E."/>
            <person name="Barrangou R."/>
            <person name="Ganesan B."/>
            <person name="Xie Y."/>
            <person name="Rawsthorne H."/>
            <person name="Tamir D."/>
            <person name="Parker C."/>
            <person name="Breidt F."/>
            <person name="Broadbent J.R."/>
            <person name="Hutkins R."/>
            <person name="O'Sullivan D."/>
            <person name="Steele J."/>
            <person name="Unlu G."/>
            <person name="Saier M.H. Jr."/>
            <person name="Klaenhammer T."/>
            <person name="Richardson P."/>
            <person name="Kozyavkin S."/>
            <person name="Weimer B.C."/>
            <person name="Mills D.A."/>
        </authorList>
    </citation>
    <scope>NUCLEOTIDE SEQUENCE [LARGE SCALE GENOMIC DNA]</scope>
    <source>
        <strain>ATCC 8293 / DSM 20343 / BCRC 11652 / CCM 1803 / JCM 6124 / NCDO 523 / NBRC 100496 / NCIMB 8023 / NCTC 12954 / NRRL B-1118 / 37Y</strain>
    </source>
</reference>
<name>TMCAL_LEUMM</name>
<feature type="chain" id="PRO_0000300180" description="tRNA(Met) cytidine acetate ligase">
    <location>
        <begin position="1"/>
        <end position="390"/>
    </location>
</feature>
<feature type="binding site" evidence="1">
    <location>
        <begin position="7"/>
        <end position="20"/>
    </location>
    <ligand>
        <name>ATP</name>
        <dbReference type="ChEBI" id="CHEBI:30616"/>
    </ligand>
</feature>
<feature type="binding site" evidence="1">
    <location>
        <position position="101"/>
    </location>
    <ligand>
        <name>ATP</name>
        <dbReference type="ChEBI" id="CHEBI:30616"/>
    </ligand>
</feature>
<feature type="binding site" evidence="1">
    <location>
        <position position="152"/>
    </location>
    <ligand>
        <name>ATP</name>
        <dbReference type="ChEBI" id="CHEBI:30616"/>
    </ligand>
</feature>
<feature type="binding site" evidence="1">
    <location>
        <position position="177"/>
    </location>
    <ligand>
        <name>ATP</name>
        <dbReference type="ChEBI" id="CHEBI:30616"/>
    </ligand>
</feature>
<dbReference type="EC" id="6.3.4.-" evidence="1"/>
<dbReference type="EMBL" id="CP000414">
    <property type="protein sequence ID" value="ABJ62821.1"/>
    <property type="molecule type" value="Genomic_DNA"/>
</dbReference>
<dbReference type="RefSeq" id="WP_011680338.1">
    <property type="nucleotide sequence ID" value="NC_008531.1"/>
</dbReference>
<dbReference type="SMR" id="Q03VF1"/>
<dbReference type="EnsemblBacteria" id="ABJ62821">
    <property type="protein sequence ID" value="ABJ62821"/>
    <property type="gene ID" value="LEUM_1734"/>
</dbReference>
<dbReference type="GeneID" id="29577363"/>
<dbReference type="KEGG" id="lme:LEUM_1734"/>
<dbReference type="eggNOG" id="COG1323">
    <property type="taxonomic scope" value="Bacteria"/>
</dbReference>
<dbReference type="HOGENOM" id="CLU_038915_0_2_9"/>
<dbReference type="Proteomes" id="UP000000362">
    <property type="component" value="Chromosome"/>
</dbReference>
<dbReference type="GO" id="GO:0005737">
    <property type="term" value="C:cytoplasm"/>
    <property type="evidence" value="ECO:0007669"/>
    <property type="project" value="UniProtKB-SubCell"/>
</dbReference>
<dbReference type="GO" id="GO:0005524">
    <property type="term" value="F:ATP binding"/>
    <property type="evidence" value="ECO:0007669"/>
    <property type="project" value="UniProtKB-KW"/>
</dbReference>
<dbReference type="GO" id="GO:0016879">
    <property type="term" value="F:ligase activity, forming carbon-nitrogen bonds"/>
    <property type="evidence" value="ECO:0007669"/>
    <property type="project" value="UniProtKB-UniRule"/>
</dbReference>
<dbReference type="GO" id="GO:0000049">
    <property type="term" value="F:tRNA binding"/>
    <property type="evidence" value="ECO:0007669"/>
    <property type="project" value="UniProtKB-KW"/>
</dbReference>
<dbReference type="GO" id="GO:0006400">
    <property type="term" value="P:tRNA modification"/>
    <property type="evidence" value="ECO:0007669"/>
    <property type="project" value="UniProtKB-UniRule"/>
</dbReference>
<dbReference type="Gene3D" id="3.40.50.620">
    <property type="entry name" value="HUPs"/>
    <property type="match status" value="1"/>
</dbReference>
<dbReference type="HAMAP" id="MF_01539">
    <property type="entry name" value="TmcAL"/>
    <property type="match status" value="1"/>
</dbReference>
<dbReference type="InterPro" id="IPR004821">
    <property type="entry name" value="Cyt_trans-like"/>
</dbReference>
<dbReference type="InterPro" id="IPR014729">
    <property type="entry name" value="Rossmann-like_a/b/a_fold"/>
</dbReference>
<dbReference type="InterPro" id="IPR008513">
    <property type="entry name" value="tRNA(Met)_cyd_acetate_ligase"/>
</dbReference>
<dbReference type="NCBIfam" id="TIGR00125">
    <property type="entry name" value="cyt_tran_rel"/>
    <property type="match status" value="1"/>
</dbReference>
<dbReference type="NCBIfam" id="NF010191">
    <property type="entry name" value="PRK13670.1"/>
    <property type="match status" value="1"/>
</dbReference>
<dbReference type="PANTHER" id="PTHR37825">
    <property type="entry name" value="TRNA(MET) CYTIDINE ACETATE LIGASE"/>
    <property type="match status" value="1"/>
</dbReference>
<dbReference type="PANTHER" id="PTHR37825:SF1">
    <property type="entry name" value="TRNA(MET) CYTIDINE ACETATE LIGASE"/>
    <property type="match status" value="1"/>
</dbReference>
<dbReference type="Pfam" id="PF05636">
    <property type="entry name" value="HIGH_NTase1"/>
    <property type="match status" value="1"/>
</dbReference>
<dbReference type="SUPFAM" id="SSF52374">
    <property type="entry name" value="Nucleotidylyl transferase"/>
    <property type="match status" value="1"/>
</dbReference>